<proteinExistence type="evidence at protein level"/>
<organism>
    <name type="scientific">Salmonella typhimurium (strain LT2 / SGSC1412 / ATCC 700720)</name>
    <dbReference type="NCBI Taxonomy" id="99287"/>
    <lineage>
        <taxon>Bacteria</taxon>
        <taxon>Pseudomonadati</taxon>
        <taxon>Pseudomonadota</taxon>
        <taxon>Gammaproteobacteria</taxon>
        <taxon>Enterobacterales</taxon>
        <taxon>Enterobacteriaceae</taxon>
        <taxon>Salmonella</taxon>
    </lineage>
</organism>
<evidence type="ECO:0000255" key="1">
    <source>
        <dbReference type="HAMAP-Rule" id="MF_01974"/>
    </source>
</evidence>
<evidence type="ECO:0000269" key="2">
    <source>
    </source>
</evidence>
<evidence type="ECO:0000305" key="3"/>
<accession>P0A1X6</accession>
<accession>P10882</accession>
<name>MAP1_SALTY</name>
<gene>
    <name evidence="1" type="primary">map</name>
    <name type="synonym">pepM</name>
    <name type="ordered locus">STM0215</name>
</gene>
<keyword id="KW-0031">Aminopeptidase</keyword>
<keyword id="KW-0903">Direct protein sequencing</keyword>
<keyword id="KW-0378">Hydrolase</keyword>
<keyword id="KW-0479">Metal-binding</keyword>
<keyword id="KW-0645">Protease</keyword>
<keyword id="KW-1185">Reference proteome</keyword>
<dbReference type="EC" id="3.4.11.18" evidence="1"/>
<dbReference type="EMBL" id="X55778">
    <property type="protein sequence ID" value="CAA39298.1"/>
    <property type="molecule type" value="Genomic_DNA"/>
</dbReference>
<dbReference type="EMBL" id="AE006468">
    <property type="protein sequence ID" value="AAL19179.1"/>
    <property type="molecule type" value="Genomic_DNA"/>
</dbReference>
<dbReference type="PIR" id="S12027">
    <property type="entry name" value="S12027"/>
</dbReference>
<dbReference type="RefSeq" id="NP_459220.1">
    <property type="nucleotide sequence ID" value="NC_003197.2"/>
</dbReference>
<dbReference type="RefSeq" id="WP_001018214.1">
    <property type="nucleotide sequence ID" value="NC_003197.2"/>
</dbReference>
<dbReference type="SMR" id="P0A1X6"/>
<dbReference type="STRING" id="99287.STM0215"/>
<dbReference type="MEROPS" id="M24.001"/>
<dbReference type="PaxDb" id="99287-STM0215"/>
<dbReference type="GeneID" id="1251733"/>
<dbReference type="KEGG" id="stm:STM0215"/>
<dbReference type="PATRIC" id="fig|99287.12.peg.228"/>
<dbReference type="HOGENOM" id="CLU_015857_0_0_6"/>
<dbReference type="OMA" id="FYGDHAY"/>
<dbReference type="PhylomeDB" id="P0A1X6"/>
<dbReference type="BioCyc" id="SENT99287:STM0215-MONOMER"/>
<dbReference type="Proteomes" id="UP000001014">
    <property type="component" value="Chromosome"/>
</dbReference>
<dbReference type="GO" id="GO:0005829">
    <property type="term" value="C:cytosol"/>
    <property type="evidence" value="ECO:0000318"/>
    <property type="project" value="GO_Central"/>
</dbReference>
<dbReference type="GO" id="GO:0004239">
    <property type="term" value="F:initiator methionyl aminopeptidase activity"/>
    <property type="evidence" value="ECO:0007669"/>
    <property type="project" value="UniProtKB-UniRule"/>
</dbReference>
<dbReference type="GO" id="GO:0046872">
    <property type="term" value="F:metal ion binding"/>
    <property type="evidence" value="ECO:0007669"/>
    <property type="project" value="UniProtKB-UniRule"/>
</dbReference>
<dbReference type="GO" id="GO:0070006">
    <property type="term" value="F:metalloaminopeptidase activity"/>
    <property type="evidence" value="ECO:0000318"/>
    <property type="project" value="GO_Central"/>
</dbReference>
<dbReference type="GO" id="GO:0006508">
    <property type="term" value="P:proteolysis"/>
    <property type="evidence" value="ECO:0007669"/>
    <property type="project" value="UniProtKB-KW"/>
</dbReference>
<dbReference type="CDD" id="cd01086">
    <property type="entry name" value="MetAP1"/>
    <property type="match status" value="1"/>
</dbReference>
<dbReference type="FunFam" id="3.90.230.10:FF:000001">
    <property type="entry name" value="Methionine aminopeptidase"/>
    <property type="match status" value="1"/>
</dbReference>
<dbReference type="Gene3D" id="3.90.230.10">
    <property type="entry name" value="Creatinase/methionine aminopeptidase superfamily"/>
    <property type="match status" value="1"/>
</dbReference>
<dbReference type="HAMAP" id="MF_01974">
    <property type="entry name" value="MetAP_1"/>
    <property type="match status" value="1"/>
</dbReference>
<dbReference type="InterPro" id="IPR036005">
    <property type="entry name" value="Creatinase/aminopeptidase-like"/>
</dbReference>
<dbReference type="InterPro" id="IPR000994">
    <property type="entry name" value="Pept_M24"/>
</dbReference>
<dbReference type="InterPro" id="IPR001714">
    <property type="entry name" value="Pept_M24_MAP"/>
</dbReference>
<dbReference type="InterPro" id="IPR002467">
    <property type="entry name" value="Pept_M24A_MAP1"/>
</dbReference>
<dbReference type="NCBIfam" id="TIGR00500">
    <property type="entry name" value="met_pdase_I"/>
    <property type="match status" value="1"/>
</dbReference>
<dbReference type="PANTHER" id="PTHR43330">
    <property type="entry name" value="METHIONINE AMINOPEPTIDASE"/>
    <property type="match status" value="1"/>
</dbReference>
<dbReference type="PANTHER" id="PTHR43330:SF27">
    <property type="entry name" value="METHIONINE AMINOPEPTIDASE"/>
    <property type="match status" value="1"/>
</dbReference>
<dbReference type="Pfam" id="PF00557">
    <property type="entry name" value="Peptidase_M24"/>
    <property type="match status" value="1"/>
</dbReference>
<dbReference type="PRINTS" id="PR00599">
    <property type="entry name" value="MAPEPTIDASE"/>
</dbReference>
<dbReference type="SUPFAM" id="SSF55920">
    <property type="entry name" value="Creatinase/aminopeptidase"/>
    <property type="match status" value="1"/>
</dbReference>
<dbReference type="PROSITE" id="PS00680">
    <property type="entry name" value="MAP_1"/>
    <property type="match status" value="1"/>
</dbReference>
<comment type="function">
    <text evidence="1 2">Removes the N-terminal methionine from nascent proteins. The N-terminal methionine is often cleaved when the second residue in the primary sequence is small and uncharged (Met-Ala-, Cys, Gly, Pro, Ser, Thr, or Val). Requires deformylation of the N(alpha)-formylated initiator methionine before it can be hydrolyzed.</text>
</comment>
<comment type="catalytic activity">
    <reaction evidence="1">
        <text>Release of N-terminal amino acids, preferentially methionine, from peptides and arylamides.</text>
        <dbReference type="EC" id="3.4.11.18"/>
    </reaction>
</comment>
<comment type="cofactor">
    <cofactor evidence="1">
        <name>Co(2+)</name>
        <dbReference type="ChEBI" id="CHEBI:48828"/>
    </cofactor>
    <cofactor evidence="1">
        <name>Zn(2+)</name>
        <dbReference type="ChEBI" id="CHEBI:29105"/>
    </cofactor>
    <cofactor evidence="1">
        <name>Mn(2+)</name>
        <dbReference type="ChEBI" id="CHEBI:29035"/>
    </cofactor>
    <cofactor evidence="1">
        <name>Fe(2+)</name>
        <dbReference type="ChEBI" id="CHEBI:29033"/>
    </cofactor>
    <text evidence="1">Binds 2 divalent metal cations per subunit. Has a high-affinity and a low affinity metal-binding site. The true nature of the physiological cofactor is under debate. The enzyme is active with cobalt, zinc, manganese or divalent iron ions. Most likely, methionine aminopeptidases function as mononuclear Fe(2+)-metalloproteases under physiological conditions, and the catalytically relevant metal-binding site has been assigned to the histidine-containing high-affinity site.</text>
</comment>
<comment type="subunit">
    <text evidence="1">Monomer.</text>
</comment>
<comment type="similarity">
    <text evidence="1">Belongs to the peptidase M24A family. Methionine aminopeptidase type 1 subfamily.</text>
</comment>
<reference key="1">
    <citation type="journal article" date="1990" name="Mol. Gen. Genet.">
        <title>Cloning and nucleotide sequence of the Salmonella typhimurium pepM gene.</title>
        <authorList>
            <person name="Movva N.R."/>
            <person name="Semon D."/>
            <person name="Meyer C."/>
            <person name="Kawashima E."/>
            <person name="Wingfield P."/>
            <person name="Miller J.L."/>
            <person name="Miller C.G."/>
        </authorList>
    </citation>
    <scope>NUCLEOTIDE SEQUENCE [GENOMIC DNA]</scope>
    <source>
        <strain>LT2</strain>
    </source>
</reference>
<reference key="2">
    <citation type="journal article" date="2001" name="Nature">
        <title>Complete genome sequence of Salmonella enterica serovar Typhimurium LT2.</title>
        <authorList>
            <person name="McClelland M."/>
            <person name="Sanderson K.E."/>
            <person name="Spieth J."/>
            <person name="Clifton S.W."/>
            <person name="Latreille P."/>
            <person name="Courtney L."/>
            <person name="Porwollik S."/>
            <person name="Ali J."/>
            <person name="Dante M."/>
            <person name="Du F."/>
            <person name="Hou S."/>
            <person name="Layman D."/>
            <person name="Leonard S."/>
            <person name="Nguyen C."/>
            <person name="Scott K."/>
            <person name="Holmes A."/>
            <person name="Grewal N."/>
            <person name="Mulvaney E."/>
            <person name="Ryan E."/>
            <person name="Sun H."/>
            <person name="Florea L."/>
            <person name="Miller W."/>
            <person name="Stoneking T."/>
            <person name="Nhan M."/>
            <person name="Waterston R."/>
            <person name="Wilson R.K."/>
        </authorList>
    </citation>
    <scope>NUCLEOTIDE SEQUENCE [LARGE SCALE GENOMIC DNA]</scope>
    <source>
        <strain>LT2 / SGSC1412 / ATCC 700720</strain>
    </source>
</reference>
<reference key="3">
    <citation type="journal article" date="1989" name="Eur. J. Biochem.">
        <title>Purification and characterization of a methionine-specific aminopeptidase from Salmonella typhimurium.</title>
        <authorList>
            <person name="Wingfield P."/>
            <person name="Graber P."/>
            <person name="Turcatti G."/>
            <person name="Movva N.R."/>
            <person name="Pelletier M."/>
            <person name="Craig S."/>
            <person name="Rose K."/>
            <person name="Miller C.G."/>
        </authorList>
    </citation>
    <scope>PROTEIN SEQUENCE OF 2-264</scope>
    <scope>FUNCTION</scope>
</reference>
<sequence>MAISIKTSEDIEKMRVAGRLAAEVLEMIEPYIKPGVTTGELDRICNDYIVNEQHAISACLGYHGYPKSVCISINEVVCHGIPDDAKHLKDGDIVNIDVTVIKDEFHGDTSKMFIVGKPTILGERLCRVTQESLYLGIKMVKPGIRLRTIGAAIQKYAEGEGFSVVREYCGHGIGRGFHEEPQVLHYDADDGGVVLQPGMTFTIEPMLNAGDYRIRTMKDGWTVKTKDRSLSAQYEHTIVVTENGCEILTLRKDDTIPAIITHDE</sequence>
<feature type="initiator methionine" description="Removed" evidence="2">
    <location>
        <position position="1"/>
    </location>
</feature>
<feature type="chain" id="PRO_0000148952" description="Methionine aminopeptidase">
    <location>
        <begin position="2"/>
        <end position="264"/>
    </location>
</feature>
<feature type="binding site" evidence="1">
    <location>
        <position position="79"/>
    </location>
    <ligand>
        <name>substrate</name>
    </ligand>
</feature>
<feature type="binding site" evidence="1">
    <location>
        <position position="97"/>
    </location>
    <ligand>
        <name>a divalent metal cation</name>
        <dbReference type="ChEBI" id="CHEBI:60240"/>
        <label>1</label>
    </ligand>
</feature>
<feature type="binding site" evidence="1">
    <location>
        <position position="108"/>
    </location>
    <ligand>
        <name>a divalent metal cation</name>
        <dbReference type="ChEBI" id="CHEBI:60240"/>
        <label>1</label>
    </ligand>
</feature>
<feature type="binding site" evidence="1">
    <location>
        <position position="108"/>
    </location>
    <ligand>
        <name>a divalent metal cation</name>
        <dbReference type="ChEBI" id="CHEBI:60240"/>
        <label>2</label>
        <note>catalytic</note>
    </ligand>
</feature>
<feature type="binding site" evidence="1">
    <location>
        <position position="171"/>
    </location>
    <ligand>
        <name>a divalent metal cation</name>
        <dbReference type="ChEBI" id="CHEBI:60240"/>
        <label>2</label>
        <note>catalytic</note>
    </ligand>
</feature>
<feature type="binding site" evidence="1">
    <location>
        <position position="178"/>
    </location>
    <ligand>
        <name>substrate</name>
    </ligand>
</feature>
<feature type="binding site" evidence="1">
    <location>
        <position position="204"/>
    </location>
    <ligand>
        <name>a divalent metal cation</name>
        <dbReference type="ChEBI" id="CHEBI:60240"/>
        <label>2</label>
        <note>catalytic</note>
    </ligand>
</feature>
<feature type="binding site" evidence="1">
    <location>
        <position position="235"/>
    </location>
    <ligand>
        <name>a divalent metal cation</name>
        <dbReference type="ChEBI" id="CHEBI:60240"/>
        <label>1</label>
    </ligand>
</feature>
<feature type="binding site" evidence="1">
    <location>
        <position position="235"/>
    </location>
    <ligand>
        <name>a divalent metal cation</name>
        <dbReference type="ChEBI" id="CHEBI:60240"/>
        <label>2</label>
        <note>catalytic</note>
    </ligand>
</feature>
<feature type="sequence conflict" description="In Ref. 3; AA sequence." evidence="3" ref="3">
    <original>GIK</original>
    <variation>ALR</variation>
    <location>
        <begin position="136"/>
        <end position="138"/>
    </location>
</feature>
<feature type="sequence conflict" description="In Ref. 3; AA sequence." evidence="3" ref="3">
    <original>R</original>
    <variation>N</variation>
    <location>
        <position position="145"/>
    </location>
</feature>
<feature type="sequence conflict" description="In Ref. 3; AA sequence." evidence="3" ref="3">
    <original>T</original>
    <variation>E</variation>
    <location>
        <position position="148"/>
    </location>
</feature>
<feature type="sequence conflict" description="In Ref. 3; AA sequence." evidence="3" ref="3">
    <original>G</original>
    <variation>A</variation>
    <location>
        <position position="159"/>
    </location>
</feature>
<protein>
    <recommendedName>
        <fullName evidence="1">Methionine aminopeptidase</fullName>
        <shortName evidence="1">MAP</shortName>
        <shortName evidence="1">MetAP</shortName>
        <ecNumber evidence="1">3.4.11.18</ecNumber>
    </recommendedName>
    <alternativeName>
        <fullName evidence="1">Peptidase M</fullName>
    </alternativeName>
</protein>